<accession>A8M7X6</accession>
<organism>
    <name type="scientific">Salinispora arenicola (strain CNS-205)</name>
    <dbReference type="NCBI Taxonomy" id="391037"/>
    <lineage>
        <taxon>Bacteria</taxon>
        <taxon>Bacillati</taxon>
        <taxon>Actinomycetota</taxon>
        <taxon>Actinomycetes</taxon>
        <taxon>Micromonosporales</taxon>
        <taxon>Micromonosporaceae</taxon>
        <taxon>Salinispora</taxon>
    </lineage>
</organism>
<protein>
    <recommendedName>
        <fullName evidence="1">Transcriptional repressor NrdR</fullName>
    </recommendedName>
</protein>
<name>NRDR_SALAI</name>
<gene>
    <name evidence="1" type="primary">nrdR</name>
    <name type="ordered locus">Sare_1410</name>
</gene>
<comment type="function">
    <text evidence="1">Negatively regulates transcription of bacterial ribonucleotide reductase nrd genes and operons by binding to NrdR-boxes.</text>
</comment>
<comment type="cofactor">
    <cofactor evidence="1">
        <name>Zn(2+)</name>
        <dbReference type="ChEBI" id="CHEBI:29105"/>
    </cofactor>
    <text evidence="1">Binds 1 zinc ion.</text>
</comment>
<comment type="similarity">
    <text evidence="1">Belongs to the NrdR family.</text>
</comment>
<reference key="1">
    <citation type="submission" date="2007-10" db="EMBL/GenBank/DDBJ databases">
        <title>Complete sequence of Salinispora arenicola CNS-205.</title>
        <authorList>
            <consortium name="US DOE Joint Genome Institute"/>
            <person name="Copeland A."/>
            <person name="Lucas S."/>
            <person name="Lapidus A."/>
            <person name="Barry K."/>
            <person name="Glavina del Rio T."/>
            <person name="Dalin E."/>
            <person name="Tice H."/>
            <person name="Pitluck S."/>
            <person name="Foster B."/>
            <person name="Schmutz J."/>
            <person name="Larimer F."/>
            <person name="Land M."/>
            <person name="Hauser L."/>
            <person name="Kyrpides N."/>
            <person name="Ivanova N."/>
            <person name="Jensen P.R."/>
            <person name="Moore B.S."/>
            <person name="Penn K."/>
            <person name="Jenkins C."/>
            <person name="Udwary D."/>
            <person name="Xiang L."/>
            <person name="Gontang E."/>
            <person name="Richardson P."/>
        </authorList>
    </citation>
    <scope>NUCLEOTIDE SEQUENCE [LARGE SCALE GENOMIC DNA]</scope>
    <source>
        <strain>CNS-205</strain>
    </source>
</reference>
<proteinExistence type="inferred from homology"/>
<keyword id="KW-0067">ATP-binding</keyword>
<keyword id="KW-0238">DNA-binding</keyword>
<keyword id="KW-0479">Metal-binding</keyword>
<keyword id="KW-0547">Nucleotide-binding</keyword>
<keyword id="KW-0678">Repressor</keyword>
<keyword id="KW-0804">Transcription</keyword>
<keyword id="KW-0805">Transcription regulation</keyword>
<keyword id="KW-0862">Zinc</keyword>
<keyword id="KW-0863">Zinc-finger</keyword>
<dbReference type="EMBL" id="CP000850">
    <property type="protein sequence ID" value="ABV97310.1"/>
    <property type="molecule type" value="Genomic_DNA"/>
</dbReference>
<dbReference type="SMR" id="A8M7X6"/>
<dbReference type="STRING" id="391037.Sare_1410"/>
<dbReference type="KEGG" id="saq:Sare_1410"/>
<dbReference type="PATRIC" id="fig|391037.6.peg.1436"/>
<dbReference type="eggNOG" id="COG1327">
    <property type="taxonomic scope" value="Bacteria"/>
</dbReference>
<dbReference type="HOGENOM" id="CLU_108412_1_0_11"/>
<dbReference type="OrthoDB" id="9807461at2"/>
<dbReference type="GO" id="GO:0005524">
    <property type="term" value="F:ATP binding"/>
    <property type="evidence" value="ECO:0007669"/>
    <property type="project" value="UniProtKB-KW"/>
</dbReference>
<dbReference type="GO" id="GO:0003677">
    <property type="term" value="F:DNA binding"/>
    <property type="evidence" value="ECO:0007669"/>
    <property type="project" value="UniProtKB-KW"/>
</dbReference>
<dbReference type="GO" id="GO:0008270">
    <property type="term" value="F:zinc ion binding"/>
    <property type="evidence" value="ECO:0007669"/>
    <property type="project" value="UniProtKB-UniRule"/>
</dbReference>
<dbReference type="GO" id="GO:0045892">
    <property type="term" value="P:negative regulation of DNA-templated transcription"/>
    <property type="evidence" value="ECO:0007669"/>
    <property type="project" value="UniProtKB-UniRule"/>
</dbReference>
<dbReference type="HAMAP" id="MF_00440">
    <property type="entry name" value="NrdR"/>
    <property type="match status" value="1"/>
</dbReference>
<dbReference type="InterPro" id="IPR005144">
    <property type="entry name" value="ATP-cone_dom"/>
</dbReference>
<dbReference type="InterPro" id="IPR055173">
    <property type="entry name" value="NrdR-like_N"/>
</dbReference>
<dbReference type="InterPro" id="IPR003796">
    <property type="entry name" value="RNR_NrdR-like"/>
</dbReference>
<dbReference type="NCBIfam" id="TIGR00244">
    <property type="entry name" value="transcriptional regulator NrdR"/>
    <property type="match status" value="1"/>
</dbReference>
<dbReference type="PANTHER" id="PTHR30455">
    <property type="entry name" value="TRANSCRIPTIONAL REPRESSOR NRDR"/>
    <property type="match status" value="1"/>
</dbReference>
<dbReference type="PANTHER" id="PTHR30455:SF2">
    <property type="entry name" value="TRANSCRIPTIONAL REPRESSOR NRDR"/>
    <property type="match status" value="1"/>
</dbReference>
<dbReference type="Pfam" id="PF03477">
    <property type="entry name" value="ATP-cone"/>
    <property type="match status" value="1"/>
</dbReference>
<dbReference type="Pfam" id="PF22811">
    <property type="entry name" value="Zn_ribbon_NrdR"/>
    <property type="match status" value="1"/>
</dbReference>
<dbReference type="PROSITE" id="PS51161">
    <property type="entry name" value="ATP_CONE"/>
    <property type="match status" value="1"/>
</dbReference>
<sequence>MRCPYCRHPDSRVVDSREADDGQLIRRRRSCPECGKRFTTVEEAVLAVVKRSGVTEPFSRTKIIGGVRKACQGRPVDDDSIALLAQKVEETVRAKGAAELPSHEVGLAILGPLRDLDEVAYLRFASVYRSFESLADFEREIETLRTAAQTRGGG</sequence>
<evidence type="ECO:0000255" key="1">
    <source>
        <dbReference type="HAMAP-Rule" id="MF_00440"/>
    </source>
</evidence>
<feature type="chain" id="PRO_1000080817" description="Transcriptional repressor NrdR">
    <location>
        <begin position="1"/>
        <end position="154"/>
    </location>
</feature>
<feature type="domain" description="ATP-cone" evidence="1">
    <location>
        <begin position="46"/>
        <end position="136"/>
    </location>
</feature>
<feature type="zinc finger region" evidence="1">
    <location>
        <begin position="3"/>
        <end position="34"/>
    </location>
</feature>